<proteinExistence type="inferred from homology"/>
<protein>
    <recommendedName>
        <fullName evidence="1">Alanine racemase</fullName>
        <ecNumber evidence="1">5.1.1.1</ecNumber>
    </recommendedName>
</protein>
<dbReference type="EC" id="5.1.1.1" evidence="1"/>
<dbReference type="EMBL" id="CP000803">
    <property type="protein sequence ID" value="ABU61889.2"/>
    <property type="molecule type" value="Genomic_DNA"/>
</dbReference>
<dbReference type="RefSeq" id="WP_010031204.1">
    <property type="nucleotide sequence ID" value="NC_009749.1"/>
</dbReference>
<dbReference type="SMR" id="A7ND36"/>
<dbReference type="KEGG" id="fta:FTA_1414"/>
<dbReference type="HOGENOM" id="CLU_028393_2_2_6"/>
<dbReference type="UniPathway" id="UPA00042">
    <property type="reaction ID" value="UER00497"/>
</dbReference>
<dbReference type="GO" id="GO:0005829">
    <property type="term" value="C:cytosol"/>
    <property type="evidence" value="ECO:0007669"/>
    <property type="project" value="TreeGrafter"/>
</dbReference>
<dbReference type="GO" id="GO:0008784">
    <property type="term" value="F:alanine racemase activity"/>
    <property type="evidence" value="ECO:0007669"/>
    <property type="project" value="UniProtKB-UniRule"/>
</dbReference>
<dbReference type="GO" id="GO:0030170">
    <property type="term" value="F:pyridoxal phosphate binding"/>
    <property type="evidence" value="ECO:0007669"/>
    <property type="project" value="UniProtKB-UniRule"/>
</dbReference>
<dbReference type="GO" id="GO:0030632">
    <property type="term" value="P:D-alanine biosynthetic process"/>
    <property type="evidence" value="ECO:0007669"/>
    <property type="project" value="UniProtKB-UniRule"/>
</dbReference>
<dbReference type="CDD" id="cd00430">
    <property type="entry name" value="PLPDE_III_AR"/>
    <property type="match status" value="1"/>
</dbReference>
<dbReference type="FunFam" id="3.20.20.10:FF:000002">
    <property type="entry name" value="Alanine racemase"/>
    <property type="match status" value="1"/>
</dbReference>
<dbReference type="Gene3D" id="3.20.20.10">
    <property type="entry name" value="Alanine racemase"/>
    <property type="match status" value="1"/>
</dbReference>
<dbReference type="Gene3D" id="2.40.37.10">
    <property type="entry name" value="Lyase, Ornithine Decarboxylase, Chain A, domain 1"/>
    <property type="match status" value="1"/>
</dbReference>
<dbReference type="HAMAP" id="MF_01201">
    <property type="entry name" value="Ala_racemase"/>
    <property type="match status" value="1"/>
</dbReference>
<dbReference type="InterPro" id="IPR000821">
    <property type="entry name" value="Ala_racemase"/>
</dbReference>
<dbReference type="InterPro" id="IPR009006">
    <property type="entry name" value="Ala_racemase/Decarboxylase_C"/>
</dbReference>
<dbReference type="InterPro" id="IPR011079">
    <property type="entry name" value="Ala_racemase_C"/>
</dbReference>
<dbReference type="InterPro" id="IPR001608">
    <property type="entry name" value="Ala_racemase_N"/>
</dbReference>
<dbReference type="InterPro" id="IPR029066">
    <property type="entry name" value="PLP-binding_barrel"/>
</dbReference>
<dbReference type="NCBIfam" id="TIGR00492">
    <property type="entry name" value="alr"/>
    <property type="match status" value="1"/>
</dbReference>
<dbReference type="PANTHER" id="PTHR30511">
    <property type="entry name" value="ALANINE RACEMASE"/>
    <property type="match status" value="1"/>
</dbReference>
<dbReference type="PANTHER" id="PTHR30511:SF0">
    <property type="entry name" value="ALANINE RACEMASE, CATABOLIC-RELATED"/>
    <property type="match status" value="1"/>
</dbReference>
<dbReference type="Pfam" id="PF00842">
    <property type="entry name" value="Ala_racemase_C"/>
    <property type="match status" value="1"/>
</dbReference>
<dbReference type="Pfam" id="PF01168">
    <property type="entry name" value="Ala_racemase_N"/>
    <property type="match status" value="1"/>
</dbReference>
<dbReference type="PRINTS" id="PR00992">
    <property type="entry name" value="ALARACEMASE"/>
</dbReference>
<dbReference type="SMART" id="SM01005">
    <property type="entry name" value="Ala_racemase_C"/>
    <property type="match status" value="1"/>
</dbReference>
<dbReference type="SUPFAM" id="SSF50621">
    <property type="entry name" value="Alanine racemase C-terminal domain-like"/>
    <property type="match status" value="1"/>
</dbReference>
<dbReference type="SUPFAM" id="SSF51419">
    <property type="entry name" value="PLP-binding barrel"/>
    <property type="match status" value="1"/>
</dbReference>
<feature type="chain" id="PRO_1000085502" description="Alanine racemase">
    <location>
        <begin position="1"/>
        <end position="365"/>
    </location>
</feature>
<feature type="active site" description="Proton acceptor; specific for D-alanine" evidence="1">
    <location>
        <position position="32"/>
    </location>
</feature>
<feature type="active site" description="Proton acceptor; specific for L-alanine" evidence="1">
    <location>
        <position position="257"/>
    </location>
</feature>
<feature type="binding site" evidence="1">
    <location>
        <position position="128"/>
    </location>
    <ligand>
        <name>substrate</name>
    </ligand>
</feature>
<feature type="binding site" evidence="1">
    <location>
        <position position="305"/>
    </location>
    <ligand>
        <name>substrate</name>
    </ligand>
</feature>
<feature type="modified residue" description="N6-(pyridoxal phosphate)lysine" evidence="1">
    <location>
        <position position="32"/>
    </location>
</feature>
<evidence type="ECO:0000255" key="1">
    <source>
        <dbReference type="HAMAP-Rule" id="MF_01201"/>
    </source>
</evidence>
<organism>
    <name type="scientific">Francisella tularensis subsp. holarctica (strain FTNF002-00 / FTA)</name>
    <dbReference type="NCBI Taxonomy" id="458234"/>
    <lineage>
        <taxon>Bacteria</taxon>
        <taxon>Pseudomonadati</taxon>
        <taxon>Pseudomonadota</taxon>
        <taxon>Gammaproteobacteria</taxon>
        <taxon>Thiotrichales</taxon>
        <taxon>Francisellaceae</taxon>
        <taxon>Francisella</taxon>
    </lineage>
</organism>
<comment type="function">
    <text evidence="1">Catalyzes the interconversion of L-alanine and D-alanine. May also act on other amino acids.</text>
</comment>
<comment type="catalytic activity">
    <reaction evidence="1">
        <text>L-alanine = D-alanine</text>
        <dbReference type="Rhea" id="RHEA:20249"/>
        <dbReference type="ChEBI" id="CHEBI:57416"/>
        <dbReference type="ChEBI" id="CHEBI:57972"/>
        <dbReference type="EC" id="5.1.1.1"/>
    </reaction>
</comment>
<comment type="cofactor">
    <cofactor evidence="1">
        <name>pyridoxal 5'-phosphate</name>
        <dbReference type="ChEBI" id="CHEBI:597326"/>
    </cofactor>
</comment>
<comment type="pathway">
    <text evidence="1">Amino-acid biosynthesis; D-alanine biosynthesis; D-alanine from L-alanine: step 1/1.</text>
</comment>
<comment type="similarity">
    <text evidence="1">Belongs to the alanine racemase family.</text>
</comment>
<accession>A7ND36</accession>
<reference key="1">
    <citation type="journal article" date="2009" name="PLoS ONE">
        <title>Complete genome sequence of Francisella tularensis subspecies holarctica FTNF002-00.</title>
        <authorList>
            <person name="Barabote R.D."/>
            <person name="Xie G."/>
            <person name="Brettin T.S."/>
            <person name="Hinrichs S.H."/>
            <person name="Fey P.D."/>
            <person name="Jay J.J."/>
            <person name="Engle J.L."/>
            <person name="Godbole S.D."/>
            <person name="Noronha J.M."/>
            <person name="Scheuermann R.H."/>
            <person name="Zhou L.W."/>
            <person name="Lion C."/>
            <person name="Dempsey M.P."/>
        </authorList>
    </citation>
    <scope>NUCLEOTIDE SEQUENCE [LARGE SCALE GENOMIC DNA]</scope>
    <source>
        <strain>FTNF002-00 / FTA</strain>
    </source>
</reference>
<name>ALR_FRATF</name>
<keyword id="KW-0413">Isomerase</keyword>
<keyword id="KW-0663">Pyridoxal phosphate</keyword>
<gene>
    <name type="primary">alr</name>
    <name type="ordered locus">FTA_1414</name>
</gene>
<sequence length="365" mass="41480">MNILKISKQTLRNNIKIIREYIGNAKMCFPVKANAYGHGIEDIVENTHDLVDFFAVANSLEAFRVTAVAKNPVLVFGVIYYEYIEKMISENIRVSIQDYEYIEKLEQIAKELDKKVYAHININTGMNRMGVDYNDACRTIQRAYESDWLILEGVYSHLACADNRDHPTNIKQKNRFDSIVKFTKGLSQDIICHLSNSYGFLGQKGICYDMVRPGILSYGFLPEFYVDRVIREIKPIARLLSKVVKIITLQEGEGVGYSLIYRGFEGEQLAVIPIGYGDGFPRELGDRGFVNINDVMYPMAGRMSMDGLTVSLGINEYDVKVGDTVELISAIPRNRNSAFSIAKQTNTIEYDIMSTLNNRIIRKII</sequence>